<organism>
    <name type="scientific">Levilactobacillus brevis (strain ATCC 367 / BCRC 12310 / CIP 105137 / JCM 1170 / LMG 11437 / NCIMB 947 / NCTC 947)</name>
    <name type="common">Lactobacillus brevis</name>
    <dbReference type="NCBI Taxonomy" id="387344"/>
    <lineage>
        <taxon>Bacteria</taxon>
        <taxon>Bacillati</taxon>
        <taxon>Bacillota</taxon>
        <taxon>Bacilli</taxon>
        <taxon>Lactobacillales</taxon>
        <taxon>Lactobacillaceae</taxon>
        <taxon>Levilactobacillus</taxon>
    </lineage>
</organism>
<evidence type="ECO:0000255" key="1">
    <source>
        <dbReference type="HAMAP-Rule" id="MF_00014"/>
    </source>
</evidence>
<dbReference type="EMBL" id="CP000416">
    <property type="protein sequence ID" value="ABJ64076.1"/>
    <property type="molecule type" value="Genomic_DNA"/>
</dbReference>
<dbReference type="RefSeq" id="WP_011667666.1">
    <property type="nucleotide sequence ID" value="NC_008497.1"/>
</dbReference>
<dbReference type="SMR" id="Q03RU6"/>
<dbReference type="STRING" id="387344.LVIS_0941"/>
<dbReference type="KEGG" id="lbr:LVIS_0941"/>
<dbReference type="eggNOG" id="COG0806">
    <property type="taxonomic scope" value="Bacteria"/>
</dbReference>
<dbReference type="HOGENOM" id="CLU_077636_3_1_9"/>
<dbReference type="Proteomes" id="UP000001652">
    <property type="component" value="Chromosome"/>
</dbReference>
<dbReference type="GO" id="GO:0005737">
    <property type="term" value="C:cytoplasm"/>
    <property type="evidence" value="ECO:0007669"/>
    <property type="project" value="UniProtKB-SubCell"/>
</dbReference>
<dbReference type="GO" id="GO:0005840">
    <property type="term" value="C:ribosome"/>
    <property type="evidence" value="ECO:0007669"/>
    <property type="project" value="InterPro"/>
</dbReference>
<dbReference type="GO" id="GO:0043022">
    <property type="term" value="F:ribosome binding"/>
    <property type="evidence" value="ECO:0007669"/>
    <property type="project" value="InterPro"/>
</dbReference>
<dbReference type="GO" id="GO:0042274">
    <property type="term" value="P:ribosomal small subunit biogenesis"/>
    <property type="evidence" value="ECO:0007669"/>
    <property type="project" value="UniProtKB-UniRule"/>
</dbReference>
<dbReference type="GO" id="GO:0006364">
    <property type="term" value="P:rRNA processing"/>
    <property type="evidence" value="ECO:0007669"/>
    <property type="project" value="UniProtKB-UniRule"/>
</dbReference>
<dbReference type="Gene3D" id="2.30.30.240">
    <property type="entry name" value="PRC-barrel domain"/>
    <property type="match status" value="1"/>
</dbReference>
<dbReference type="Gene3D" id="2.40.30.60">
    <property type="entry name" value="RimM"/>
    <property type="match status" value="1"/>
</dbReference>
<dbReference type="HAMAP" id="MF_00014">
    <property type="entry name" value="Ribosome_mat_RimM"/>
    <property type="match status" value="1"/>
</dbReference>
<dbReference type="InterPro" id="IPR027275">
    <property type="entry name" value="PRC-brl_dom"/>
</dbReference>
<dbReference type="InterPro" id="IPR011033">
    <property type="entry name" value="PRC_barrel-like_sf"/>
</dbReference>
<dbReference type="InterPro" id="IPR011961">
    <property type="entry name" value="RimM"/>
</dbReference>
<dbReference type="InterPro" id="IPR002676">
    <property type="entry name" value="RimM_N"/>
</dbReference>
<dbReference type="InterPro" id="IPR036976">
    <property type="entry name" value="RimM_N_sf"/>
</dbReference>
<dbReference type="InterPro" id="IPR009000">
    <property type="entry name" value="Transl_B-barrel_sf"/>
</dbReference>
<dbReference type="NCBIfam" id="TIGR02273">
    <property type="entry name" value="16S_RimM"/>
    <property type="match status" value="1"/>
</dbReference>
<dbReference type="PANTHER" id="PTHR33692">
    <property type="entry name" value="RIBOSOME MATURATION FACTOR RIMM"/>
    <property type="match status" value="1"/>
</dbReference>
<dbReference type="PANTHER" id="PTHR33692:SF1">
    <property type="entry name" value="RIBOSOME MATURATION FACTOR RIMM"/>
    <property type="match status" value="1"/>
</dbReference>
<dbReference type="Pfam" id="PF05239">
    <property type="entry name" value="PRC"/>
    <property type="match status" value="1"/>
</dbReference>
<dbReference type="Pfam" id="PF01782">
    <property type="entry name" value="RimM"/>
    <property type="match status" value="1"/>
</dbReference>
<dbReference type="SUPFAM" id="SSF50346">
    <property type="entry name" value="PRC-barrel domain"/>
    <property type="match status" value="1"/>
</dbReference>
<dbReference type="SUPFAM" id="SSF50447">
    <property type="entry name" value="Translation proteins"/>
    <property type="match status" value="1"/>
</dbReference>
<accession>Q03RU6</accession>
<comment type="function">
    <text evidence="1">An accessory protein needed during the final step in the assembly of 30S ribosomal subunit, possibly for assembly of the head region. Essential for efficient processing of 16S rRNA. May be needed both before and after RbfA during the maturation of 16S rRNA. It has affinity for free ribosomal 30S subunits but not for 70S ribosomes.</text>
</comment>
<comment type="subunit">
    <text evidence="1">Binds ribosomal protein uS19.</text>
</comment>
<comment type="subcellular location">
    <subcellularLocation>
        <location evidence="1">Cytoplasm</location>
    </subcellularLocation>
</comment>
<comment type="domain">
    <text evidence="1">The PRC barrel domain binds ribosomal protein uS19.</text>
</comment>
<comment type="similarity">
    <text evidence="1">Belongs to the RimM family.</text>
</comment>
<sequence length="172" mass="19073">MAYYTVGTIVNTHGIKGEVRVVATTDFPESRFAVGSTLYAFQKDQATPVTLTVASVRQHKNFYLLSFEGKPSINDVEIFKQSTLKVTDNELESNDLRPGEYYYHQIVGLDAVTVDGENLGKIKEILSPGANDVWVVARPGKSDLLLPKIDQVIKRVDLDQGKVIVELMEGLD</sequence>
<proteinExistence type="inferred from homology"/>
<name>RIMM_LEVBA</name>
<protein>
    <recommendedName>
        <fullName evidence="1">Ribosome maturation factor RimM</fullName>
    </recommendedName>
</protein>
<gene>
    <name evidence="1" type="primary">rimM</name>
    <name type="ordered locus">LVIS_0941</name>
</gene>
<feature type="chain" id="PRO_1000001182" description="Ribosome maturation factor RimM">
    <location>
        <begin position="1"/>
        <end position="172"/>
    </location>
</feature>
<feature type="domain" description="PRC barrel" evidence="1">
    <location>
        <begin position="98"/>
        <end position="171"/>
    </location>
</feature>
<reference key="1">
    <citation type="journal article" date="2006" name="Proc. Natl. Acad. Sci. U.S.A.">
        <title>Comparative genomics of the lactic acid bacteria.</title>
        <authorList>
            <person name="Makarova K.S."/>
            <person name="Slesarev A."/>
            <person name="Wolf Y.I."/>
            <person name="Sorokin A."/>
            <person name="Mirkin B."/>
            <person name="Koonin E.V."/>
            <person name="Pavlov A."/>
            <person name="Pavlova N."/>
            <person name="Karamychev V."/>
            <person name="Polouchine N."/>
            <person name="Shakhova V."/>
            <person name="Grigoriev I."/>
            <person name="Lou Y."/>
            <person name="Rohksar D."/>
            <person name="Lucas S."/>
            <person name="Huang K."/>
            <person name="Goodstein D.M."/>
            <person name="Hawkins T."/>
            <person name="Plengvidhya V."/>
            <person name="Welker D."/>
            <person name="Hughes J."/>
            <person name="Goh Y."/>
            <person name="Benson A."/>
            <person name="Baldwin K."/>
            <person name="Lee J.-H."/>
            <person name="Diaz-Muniz I."/>
            <person name="Dosti B."/>
            <person name="Smeianov V."/>
            <person name="Wechter W."/>
            <person name="Barabote R."/>
            <person name="Lorca G."/>
            <person name="Altermann E."/>
            <person name="Barrangou R."/>
            <person name="Ganesan B."/>
            <person name="Xie Y."/>
            <person name="Rawsthorne H."/>
            <person name="Tamir D."/>
            <person name="Parker C."/>
            <person name="Breidt F."/>
            <person name="Broadbent J.R."/>
            <person name="Hutkins R."/>
            <person name="O'Sullivan D."/>
            <person name="Steele J."/>
            <person name="Unlu G."/>
            <person name="Saier M.H. Jr."/>
            <person name="Klaenhammer T."/>
            <person name="Richardson P."/>
            <person name="Kozyavkin S."/>
            <person name="Weimer B.C."/>
            <person name="Mills D.A."/>
        </authorList>
    </citation>
    <scope>NUCLEOTIDE SEQUENCE [LARGE SCALE GENOMIC DNA]</scope>
    <source>
        <strain>ATCC 367 / BCRC 12310 / CIP 105137 / JCM 1170 / LMG 11437 / NCIMB 947 / NCTC 947</strain>
    </source>
</reference>
<keyword id="KW-0143">Chaperone</keyword>
<keyword id="KW-0963">Cytoplasm</keyword>
<keyword id="KW-1185">Reference proteome</keyword>
<keyword id="KW-0690">Ribosome biogenesis</keyword>
<keyword id="KW-0698">rRNA processing</keyword>